<reference key="1">
    <citation type="journal article" date="2008" name="DNA Res.">
        <title>The whole-genome sequencing of the obligate intracellular bacterium Orientia tsutsugamushi revealed massive gene amplification during reductive genome evolution.</title>
        <authorList>
            <person name="Nakayama K."/>
            <person name="Yamashita A."/>
            <person name="Kurokawa K."/>
            <person name="Morimoto T."/>
            <person name="Ogawa M."/>
            <person name="Fukuhara M."/>
            <person name="Urakami H."/>
            <person name="Ohnishi M."/>
            <person name="Uchiyama I."/>
            <person name="Ogura Y."/>
            <person name="Ooka T."/>
            <person name="Oshima K."/>
            <person name="Tamura A."/>
            <person name="Hattori M."/>
            <person name="Hayashi T."/>
        </authorList>
    </citation>
    <scope>NUCLEOTIDE SEQUENCE [LARGE SCALE GENOMIC DNA]</scope>
    <source>
        <strain>Ikeda</strain>
    </source>
</reference>
<sequence length="325" mass="36224">MKNQLLDAKVASEEQETVLRPSLLNDFTGQNQMKSNLKIFITSSIERDESLDHTLLHGPPGLGKTTIAQIIAKEKNVNLKSTAGPILSKAADLAAILTNLQKNDVLFIDEIHRLNIHVEEILYSAMEDFSLDIMIGEGPSARSVKIYLPKFTLIGATTRLGLISKPLCDRFGIHLKLNFYSCEELTKIVERGAKVLNVALDTNAAIEIANRSRGTPRIALRLLKRVRDFGIYQNINPLNQQITDYALNQLGIDKLGLDSSDHKYLRFIAENYDGGPVGIDTIAAALSEQRDTIEEMIEPYLIQIGFVQRTQRGRVITANALKHLH</sequence>
<organism>
    <name type="scientific">Orientia tsutsugamushi (strain Ikeda)</name>
    <name type="common">Rickettsia tsutsugamushi</name>
    <dbReference type="NCBI Taxonomy" id="334380"/>
    <lineage>
        <taxon>Bacteria</taxon>
        <taxon>Pseudomonadati</taxon>
        <taxon>Pseudomonadota</taxon>
        <taxon>Alphaproteobacteria</taxon>
        <taxon>Rickettsiales</taxon>
        <taxon>Rickettsiaceae</taxon>
        <taxon>Rickettsieae</taxon>
        <taxon>Orientia</taxon>
    </lineage>
</organism>
<keyword id="KW-0067">ATP-binding</keyword>
<keyword id="KW-0963">Cytoplasm</keyword>
<keyword id="KW-0227">DNA damage</keyword>
<keyword id="KW-0233">DNA recombination</keyword>
<keyword id="KW-0234">DNA repair</keyword>
<keyword id="KW-0238">DNA-binding</keyword>
<keyword id="KW-0378">Hydrolase</keyword>
<keyword id="KW-0547">Nucleotide-binding</keyword>
<evidence type="ECO:0000255" key="1">
    <source>
        <dbReference type="HAMAP-Rule" id="MF_00016"/>
    </source>
</evidence>
<proteinExistence type="inferred from homology"/>
<feature type="chain" id="PRO_1000089660" description="Holliday junction branch migration complex subunit RuvB">
    <location>
        <begin position="1"/>
        <end position="325"/>
    </location>
</feature>
<feature type="region of interest" description="Large ATPase domain (RuvB-L)" evidence="1">
    <location>
        <begin position="1"/>
        <end position="180"/>
    </location>
</feature>
<feature type="region of interest" description="Small ATPAse domain (RuvB-S)" evidence="1">
    <location>
        <begin position="181"/>
        <end position="251"/>
    </location>
</feature>
<feature type="region of interest" description="Head domain (RuvB-H)" evidence="1">
    <location>
        <begin position="254"/>
        <end position="325"/>
    </location>
</feature>
<feature type="binding site" evidence="1">
    <location>
        <position position="19"/>
    </location>
    <ligand>
        <name>ATP</name>
        <dbReference type="ChEBI" id="CHEBI:30616"/>
    </ligand>
</feature>
<feature type="binding site" evidence="1">
    <location>
        <position position="20"/>
    </location>
    <ligand>
        <name>ATP</name>
        <dbReference type="ChEBI" id="CHEBI:30616"/>
    </ligand>
</feature>
<feature type="binding site" evidence="1">
    <location>
        <position position="61"/>
    </location>
    <ligand>
        <name>ATP</name>
        <dbReference type="ChEBI" id="CHEBI:30616"/>
    </ligand>
</feature>
<feature type="binding site" evidence="1">
    <location>
        <position position="64"/>
    </location>
    <ligand>
        <name>ATP</name>
        <dbReference type="ChEBI" id="CHEBI:30616"/>
    </ligand>
</feature>
<feature type="binding site" evidence="1">
    <location>
        <position position="65"/>
    </location>
    <ligand>
        <name>ATP</name>
        <dbReference type="ChEBI" id="CHEBI:30616"/>
    </ligand>
</feature>
<feature type="binding site" evidence="1">
    <location>
        <position position="65"/>
    </location>
    <ligand>
        <name>Mg(2+)</name>
        <dbReference type="ChEBI" id="CHEBI:18420"/>
    </ligand>
</feature>
<feature type="binding site" evidence="1">
    <location>
        <position position="66"/>
    </location>
    <ligand>
        <name>ATP</name>
        <dbReference type="ChEBI" id="CHEBI:30616"/>
    </ligand>
</feature>
<feature type="binding site" evidence="1">
    <location>
        <begin position="127"/>
        <end position="129"/>
    </location>
    <ligand>
        <name>ATP</name>
        <dbReference type="ChEBI" id="CHEBI:30616"/>
    </ligand>
</feature>
<feature type="binding site" evidence="1">
    <location>
        <position position="170"/>
    </location>
    <ligand>
        <name>ATP</name>
        <dbReference type="ChEBI" id="CHEBI:30616"/>
    </ligand>
</feature>
<feature type="binding site" evidence="1">
    <location>
        <position position="180"/>
    </location>
    <ligand>
        <name>ATP</name>
        <dbReference type="ChEBI" id="CHEBI:30616"/>
    </ligand>
</feature>
<feature type="binding site" evidence="1">
    <location>
        <position position="217"/>
    </location>
    <ligand>
        <name>ATP</name>
        <dbReference type="ChEBI" id="CHEBI:30616"/>
    </ligand>
</feature>
<feature type="binding site" evidence="1">
    <location>
        <position position="290"/>
    </location>
    <ligand>
        <name>DNA</name>
        <dbReference type="ChEBI" id="CHEBI:16991"/>
    </ligand>
</feature>
<feature type="binding site" evidence="1">
    <location>
        <position position="309"/>
    </location>
    <ligand>
        <name>DNA</name>
        <dbReference type="ChEBI" id="CHEBI:16991"/>
    </ligand>
</feature>
<feature type="binding site" evidence="1">
    <location>
        <position position="314"/>
    </location>
    <ligand>
        <name>DNA</name>
        <dbReference type="ChEBI" id="CHEBI:16991"/>
    </ligand>
</feature>
<accession>B3CRA8</accession>
<name>RUVB_ORITI</name>
<protein>
    <recommendedName>
        <fullName evidence="1">Holliday junction branch migration complex subunit RuvB</fullName>
        <ecNumber evidence="1">3.6.4.-</ecNumber>
    </recommendedName>
</protein>
<gene>
    <name evidence="1" type="primary">ruvB</name>
    <name type="ordered locus">OTT_0634</name>
</gene>
<comment type="function">
    <text evidence="1">The RuvA-RuvB-RuvC complex processes Holliday junction (HJ) DNA during genetic recombination and DNA repair, while the RuvA-RuvB complex plays an important role in the rescue of blocked DNA replication forks via replication fork reversal (RFR). RuvA specifically binds to HJ cruciform DNA, conferring on it an open structure. The RuvB hexamer acts as an ATP-dependent pump, pulling dsDNA into and through the RuvAB complex. RuvB forms 2 homohexamers on either side of HJ DNA bound by 1 or 2 RuvA tetramers; 4 subunits per hexamer contact DNA at a time. Coordinated motions by a converter formed by DNA-disengaged RuvB subunits stimulates ATP hydrolysis and nucleotide exchange. Immobilization of the converter enables RuvB to convert the ATP-contained energy into a lever motion, pulling 2 nucleotides of DNA out of the RuvA tetramer per ATP hydrolyzed, thus driving DNA branch migration. The RuvB motors rotate together with the DNA substrate, which together with the progressing nucleotide cycle form the mechanistic basis for DNA recombination by continuous HJ branch migration. Branch migration allows RuvC to scan DNA until it finds its consensus sequence, where it cleaves and resolves cruciform DNA.</text>
</comment>
<comment type="catalytic activity">
    <reaction evidence="1">
        <text>ATP + H2O = ADP + phosphate + H(+)</text>
        <dbReference type="Rhea" id="RHEA:13065"/>
        <dbReference type="ChEBI" id="CHEBI:15377"/>
        <dbReference type="ChEBI" id="CHEBI:15378"/>
        <dbReference type="ChEBI" id="CHEBI:30616"/>
        <dbReference type="ChEBI" id="CHEBI:43474"/>
        <dbReference type="ChEBI" id="CHEBI:456216"/>
    </reaction>
</comment>
<comment type="subunit">
    <text evidence="1">Homohexamer. Forms an RuvA(8)-RuvB(12)-Holliday junction (HJ) complex. HJ DNA is sandwiched between 2 RuvA tetramers; dsDNA enters through RuvA and exits via RuvB. An RuvB hexamer assembles on each DNA strand where it exits the tetramer. Each RuvB hexamer is contacted by two RuvA subunits (via domain III) on 2 adjacent RuvB subunits; this complex drives branch migration. In the full resolvosome a probable DNA-RuvA(4)-RuvB(12)-RuvC(2) complex forms which resolves the HJ.</text>
</comment>
<comment type="subcellular location">
    <subcellularLocation>
        <location evidence="1">Cytoplasm</location>
    </subcellularLocation>
</comment>
<comment type="domain">
    <text evidence="1">Has 3 domains, the large (RuvB-L) and small ATPase (RuvB-S) domains and the C-terminal head (RuvB-H) domain. The head domain binds DNA, while the ATPase domains jointly bind ATP, ADP or are empty depending on the state of the subunit in the translocation cycle. During a single DNA translocation step the structure of each domain remains the same, but their relative positions change.</text>
</comment>
<comment type="similarity">
    <text evidence="1">Belongs to the RuvB family.</text>
</comment>
<dbReference type="EC" id="3.6.4.-" evidence="1"/>
<dbReference type="EMBL" id="AP008981">
    <property type="protein sequence ID" value="BAG40092.1"/>
    <property type="molecule type" value="Genomic_DNA"/>
</dbReference>
<dbReference type="RefSeq" id="WP_012461279.1">
    <property type="nucleotide sequence ID" value="NC_010793.1"/>
</dbReference>
<dbReference type="SMR" id="B3CRA8"/>
<dbReference type="KEGG" id="ott:OTT_0634"/>
<dbReference type="HOGENOM" id="CLU_055599_1_0_5"/>
<dbReference type="OrthoDB" id="9804478at2"/>
<dbReference type="Proteomes" id="UP000001033">
    <property type="component" value="Chromosome"/>
</dbReference>
<dbReference type="GO" id="GO:0005737">
    <property type="term" value="C:cytoplasm"/>
    <property type="evidence" value="ECO:0007669"/>
    <property type="project" value="UniProtKB-SubCell"/>
</dbReference>
<dbReference type="GO" id="GO:0048476">
    <property type="term" value="C:Holliday junction resolvase complex"/>
    <property type="evidence" value="ECO:0007669"/>
    <property type="project" value="UniProtKB-UniRule"/>
</dbReference>
<dbReference type="GO" id="GO:0005524">
    <property type="term" value="F:ATP binding"/>
    <property type="evidence" value="ECO:0007669"/>
    <property type="project" value="UniProtKB-UniRule"/>
</dbReference>
<dbReference type="GO" id="GO:0016887">
    <property type="term" value="F:ATP hydrolysis activity"/>
    <property type="evidence" value="ECO:0007669"/>
    <property type="project" value="InterPro"/>
</dbReference>
<dbReference type="GO" id="GO:0000400">
    <property type="term" value="F:four-way junction DNA binding"/>
    <property type="evidence" value="ECO:0007669"/>
    <property type="project" value="UniProtKB-UniRule"/>
</dbReference>
<dbReference type="GO" id="GO:0009378">
    <property type="term" value="F:four-way junction helicase activity"/>
    <property type="evidence" value="ECO:0007669"/>
    <property type="project" value="InterPro"/>
</dbReference>
<dbReference type="GO" id="GO:0006310">
    <property type="term" value="P:DNA recombination"/>
    <property type="evidence" value="ECO:0007669"/>
    <property type="project" value="UniProtKB-UniRule"/>
</dbReference>
<dbReference type="GO" id="GO:0006281">
    <property type="term" value="P:DNA repair"/>
    <property type="evidence" value="ECO:0007669"/>
    <property type="project" value="UniProtKB-UniRule"/>
</dbReference>
<dbReference type="CDD" id="cd00009">
    <property type="entry name" value="AAA"/>
    <property type="match status" value="1"/>
</dbReference>
<dbReference type="Gene3D" id="1.10.8.60">
    <property type="match status" value="1"/>
</dbReference>
<dbReference type="Gene3D" id="3.40.50.300">
    <property type="entry name" value="P-loop containing nucleotide triphosphate hydrolases"/>
    <property type="match status" value="1"/>
</dbReference>
<dbReference type="Gene3D" id="1.10.10.10">
    <property type="entry name" value="Winged helix-like DNA-binding domain superfamily/Winged helix DNA-binding domain"/>
    <property type="match status" value="1"/>
</dbReference>
<dbReference type="HAMAP" id="MF_00016">
    <property type="entry name" value="DNA_HJ_migration_RuvB"/>
    <property type="match status" value="1"/>
</dbReference>
<dbReference type="InterPro" id="IPR003593">
    <property type="entry name" value="AAA+_ATPase"/>
</dbReference>
<dbReference type="InterPro" id="IPR041445">
    <property type="entry name" value="AAA_lid_4"/>
</dbReference>
<dbReference type="InterPro" id="IPR004605">
    <property type="entry name" value="DNA_helicase_Holl-junc_RuvB"/>
</dbReference>
<dbReference type="InterPro" id="IPR027417">
    <property type="entry name" value="P-loop_NTPase"/>
</dbReference>
<dbReference type="InterPro" id="IPR008824">
    <property type="entry name" value="RuvB-like_N"/>
</dbReference>
<dbReference type="InterPro" id="IPR008823">
    <property type="entry name" value="RuvB_C"/>
</dbReference>
<dbReference type="InterPro" id="IPR036388">
    <property type="entry name" value="WH-like_DNA-bd_sf"/>
</dbReference>
<dbReference type="InterPro" id="IPR036390">
    <property type="entry name" value="WH_DNA-bd_sf"/>
</dbReference>
<dbReference type="NCBIfam" id="NF000868">
    <property type="entry name" value="PRK00080.1"/>
    <property type="match status" value="1"/>
</dbReference>
<dbReference type="NCBIfam" id="TIGR00635">
    <property type="entry name" value="ruvB"/>
    <property type="match status" value="1"/>
</dbReference>
<dbReference type="PANTHER" id="PTHR42848">
    <property type="match status" value="1"/>
</dbReference>
<dbReference type="PANTHER" id="PTHR42848:SF1">
    <property type="entry name" value="HOLLIDAY JUNCTION BRANCH MIGRATION COMPLEX SUBUNIT RUVB"/>
    <property type="match status" value="1"/>
</dbReference>
<dbReference type="Pfam" id="PF17864">
    <property type="entry name" value="AAA_lid_4"/>
    <property type="match status" value="1"/>
</dbReference>
<dbReference type="Pfam" id="PF05491">
    <property type="entry name" value="RuvB_C"/>
    <property type="match status" value="1"/>
</dbReference>
<dbReference type="Pfam" id="PF05496">
    <property type="entry name" value="RuvB_N"/>
    <property type="match status" value="1"/>
</dbReference>
<dbReference type="SMART" id="SM00382">
    <property type="entry name" value="AAA"/>
    <property type="match status" value="1"/>
</dbReference>
<dbReference type="SUPFAM" id="SSF52540">
    <property type="entry name" value="P-loop containing nucleoside triphosphate hydrolases"/>
    <property type="match status" value="1"/>
</dbReference>
<dbReference type="SUPFAM" id="SSF46785">
    <property type="entry name" value="Winged helix' DNA-binding domain"/>
    <property type="match status" value="1"/>
</dbReference>